<gene>
    <name evidence="1" type="primary">pnp</name>
    <name type="ordered locus">SSPA2940</name>
</gene>
<evidence type="ECO:0000255" key="1">
    <source>
        <dbReference type="HAMAP-Rule" id="MF_01595"/>
    </source>
</evidence>
<evidence type="ECO:0000256" key="2">
    <source>
        <dbReference type="SAM" id="MobiDB-lite"/>
    </source>
</evidence>
<accession>B5BGJ1</accession>
<comment type="function">
    <text evidence="1">Involved in mRNA degradation. Catalyzes the phosphorolysis of single-stranded polyribonucleotides processively in the 3'- to 5'-direction.</text>
</comment>
<comment type="catalytic activity">
    <reaction evidence="1">
        <text>RNA(n+1) + phosphate = RNA(n) + a ribonucleoside 5'-diphosphate</text>
        <dbReference type="Rhea" id="RHEA:22096"/>
        <dbReference type="Rhea" id="RHEA-COMP:14527"/>
        <dbReference type="Rhea" id="RHEA-COMP:17342"/>
        <dbReference type="ChEBI" id="CHEBI:43474"/>
        <dbReference type="ChEBI" id="CHEBI:57930"/>
        <dbReference type="ChEBI" id="CHEBI:140395"/>
        <dbReference type="EC" id="2.7.7.8"/>
    </reaction>
</comment>
<comment type="cofactor">
    <cofactor evidence="1">
        <name>Mg(2+)</name>
        <dbReference type="ChEBI" id="CHEBI:18420"/>
    </cofactor>
</comment>
<comment type="subunit">
    <text evidence="1">Component of the RNA degradosome, which is a multiprotein complex involved in RNA processing and mRNA degradation.</text>
</comment>
<comment type="subcellular location">
    <subcellularLocation>
        <location evidence="1">Cytoplasm</location>
    </subcellularLocation>
</comment>
<comment type="similarity">
    <text evidence="1">Belongs to the polyribonucleotide nucleotidyltransferase family.</text>
</comment>
<sequence>MLNPIVRKFQYGQHTVTLETGMMARQATAAVMVSMDDTAVFVTVVGQKKAKPGQDFFPLTVNYQERTYAAGRIPGSFFRREGRPSEGETLIARLIDRPVRPLFPEGFVNEVQVIATVVSVNPQVNPDIVAMIGASAALSLSGIPFNGPIGAARVGYINDQYVLNPTQDELKESKLDLVVAGTEAAVLMVESEAELLSEDTMLGAVVFGHEQQQVVIQAINDLVKEAGKPRWDWQPEAVNDALNARVAALAESRLSDAYRITDKQERYAQVDVIKSETIEQLIAEDETLDANELGEILHAIEKNVVRSRVLAGEPRIDGREKDMIRGLDVRTGVLPRTHGSALFTRGETQALVTATLGTARDAQVLDELMGERTDSFLFHYNFPPYSVGETGMVGSPKRREIGHGRLAKRGVLAVMPDMDKFPYTVRVVSEITESNGSSSMASVCGASLALMDAGVPIKAAVAGIAMGLVKEGDNYVVLSDILGDEDHLGDMDFKVAGSRDGISALQMDIKIEGITKEIMQVALNQAKGARLHILGVMEQAINAPRGDISEFAPRIHTIKISTDKIKDVIGKGGSVIRALTEETGTTIEIEDDGTVKIAATDGEKAKYAIRRIEEITAEIEVGRIYNGKVTRIVDFGAFVAIGGGKEGLVHISQIADKRVEKVTDYLQMGQEVPVKVLEVDRQGRVRLSIKEATEQSQPAAAPEAPASEQAE</sequence>
<feature type="chain" id="PRO_1000192489" description="Polyribonucleotide nucleotidyltransferase">
    <location>
        <begin position="1"/>
        <end position="711"/>
    </location>
</feature>
<feature type="domain" description="KH" evidence="1">
    <location>
        <begin position="553"/>
        <end position="612"/>
    </location>
</feature>
<feature type="domain" description="S1 motif" evidence="1">
    <location>
        <begin position="622"/>
        <end position="690"/>
    </location>
</feature>
<feature type="region of interest" description="Disordered" evidence="2">
    <location>
        <begin position="690"/>
        <end position="711"/>
    </location>
</feature>
<feature type="compositionally biased region" description="Low complexity" evidence="2">
    <location>
        <begin position="694"/>
        <end position="711"/>
    </location>
</feature>
<feature type="binding site" evidence="1">
    <location>
        <position position="486"/>
    </location>
    <ligand>
        <name>Mg(2+)</name>
        <dbReference type="ChEBI" id="CHEBI:18420"/>
    </ligand>
</feature>
<feature type="binding site" evidence="1">
    <location>
        <position position="492"/>
    </location>
    <ligand>
        <name>Mg(2+)</name>
        <dbReference type="ChEBI" id="CHEBI:18420"/>
    </ligand>
</feature>
<name>PNP_SALPK</name>
<keyword id="KW-0963">Cytoplasm</keyword>
<keyword id="KW-0460">Magnesium</keyword>
<keyword id="KW-0479">Metal-binding</keyword>
<keyword id="KW-0548">Nucleotidyltransferase</keyword>
<keyword id="KW-0694">RNA-binding</keyword>
<keyword id="KW-0808">Transferase</keyword>
<dbReference type="EC" id="2.7.7.8" evidence="1"/>
<dbReference type="EMBL" id="FM200053">
    <property type="protein sequence ID" value="CAR61189.1"/>
    <property type="molecule type" value="Genomic_DNA"/>
</dbReference>
<dbReference type="RefSeq" id="WP_001670767.1">
    <property type="nucleotide sequence ID" value="NC_011147.1"/>
</dbReference>
<dbReference type="SMR" id="B5BGJ1"/>
<dbReference type="KEGG" id="sek:SSPA2940"/>
<dbReference type="HOGENOM" id="CLU_004217_2_2_6"/>
<dbReference type="Proteomes" id="UP000001869">
    <property type="component" value="Chromosome"/>
</dbReference>
<dbReference type="GO" id="GO:0005829">
    <property type="term" value="C:cytosol"/>
    <property type="evidence" value="ECO:0007669"/>
    <property type="project" value="TreeGrafter"/>
</dbReference>
<dbReference type="GO" id="GO:0000175">
    <property type="term" value="F:3'-5'-RNA exonuclease activity"/>
    <property type="evidence" value="ECO:0007669"/>
    <property type="project" value="TreeGrafter"/>
</dbReference>
<dbReference type="GO" id="GO:0000287">
    <property type="term" value="F:magnesium ion binding"/>
    <property type="evidence" value="ECO:0007669"/>
    <property type="project" value="UniProtKB-UniRule"/>
</dbReference>
<dbReference type="GO" id="GO:0004654">
    <property type="term" value="F:polyribonucleotide nucleotidyltransferase activity"/>
    <property type="evidence" value="ECO:0007669"/>
    <property type="project" value="UniProtKB-UniRule"/>
</dbReference>
<dbReference type="GO" id="GO:0003723">
    <property type="term" value="F:RNA binding"/>
    <property type="evidence" value="ECO:0007669"/>
    <property type="project" value="UniProtKB-UniRule"/>
</dbReference>
<dbReference type="GO" id="GO:0006402">
    <property type="term" value="P:mRNA catabolic process"/>
    <property type="evidence" value="ECO:0007669"/>
    <property type="project" value="UniProtKB-UniRule"/>
</dbReference>
<dbReference type="GO" id="GO:0006396">
    <property type="term" value="P:RNA processing"/>
    <property type="evidence" value="ECO:0007669"/>
    <property type="project" value="InterPro"/>
</dbReference>
<dbReference type="CDD" id="cd02393">
    <property type="entry name" value="KH-I_PNPase"/>
    <property type="match status" value="1"/>
</dbReference>
<dbReference type="CDD" id="cd11363">
    <property type="entry name" value="RNase_PH_PNPase_1"/>
    <property type="match status" value="1"/>
</dbReference>
<dbReference type="CDD" id="cd11364">
    <property type="entry name" value="RNase_PH_PNPase_2"/>
    <property type="match status" value="1"/>
</dbReference>
<dbReference type="CDD" id="cd04472">
    <property type="entry name" value="S1_PNPase"/>
    <property type="match status" value="1"/>
</dbReference>
<dbReference type="FunFam" id="2.40.50.140:FF:000023">
    <property type="entry name" value="Polyribonucleotide nucleotidyltransferase"/>
    <property type="match status" value="1"/>
</dbReference>
<dbReference type="FunFam" id="3.30.1370.10:FF:000001">
    <property type="entry name" value="Polyribonucleotide nucleotidyltransferase"/>
    <property type="match status" value="1"/>
</dbReference>
<dbReference type="FunFam" id="3.30.230.70:FF:000001">
    <property type="entry name" value="Polyribonucleotide nucleotidyltransferase"/>
    <property type="match status" value="1"/>
</dbReference>
<dbReference type="FunFam" id="3.30.230.70:FF:000002">
    <property type="entry name" value="Polyribonucleotide nucleotidyltransferase"/>
    <property type="match status" value="1"/>
</dbReference>
<dbReference type="Gene3D" id="3.30.230.70">
    <property type="entry name" value="GHMP Kinase, N-terminal domain"/>
    <property type="match status" value="2"/>
</dbReference>
<dbReference type="Gene3D" id="3.30.1370.10">
    <property type="entry name" value="K Homology domain, type 1"/>
    <property type="match status" value="1"/>
</dbReference>
<dbReference type="Gene3D" id="2.40.50.140">
    <property type="entry name" value="Nucleic acid-binding proteins"/>
    <property type="match status" value="1"/>
</dbReference>
<dbReference type="HAMAP" id="MF_01595">
    <property type="entry name" value="PNPase"/>
    <property type="match status" value="1"/>
</dbReference>
<dbReference type="InterPro" id="IPR001247">
    <property type="entry name" value="ExoRNase_PH_dom1"/>
</dbReference>
<dbReference type="InterPro" id="IPR015847">
    <property type="entry name" value="ExoRNase_PH_dom2"/>
</dbReference>
<dbReference type="InterPro" id="IPR036345">
    <property type="entry name" value="ExoRNase_PH_dom2_sf"/>
</dbReference>
<dbReference type="InterPro" id="IPR004087">
    <property type="entry name" value="KH_dom"/>
</dbReference>
<dbReference type="InterPro" id="IPR004088">
    <property type="entry name" value="KH_dom_type_1"/>
</dbReference>
<dbReference type="InterPro" id="IPR036612">
    <property type="entry name" value="KH_dom_type_1_sf"/>
</dbReference>
<dbReference type="InterPro" id="IPR012340">
    <property type="entry name" value="NA-bd_OB-fold"/>
</dbReference>
<dbReference type="InterPro" id="IPR012162">
    <property type="entry name" value="PNPase"/>
</dbReference>
<dbReference type="InterPro" id="IPR027408">
    <property type="entry name" value="PNPase/RNase_PH_dom_sf"/>
</dbReference>
<dbReference type="InterPro" id="IPR015848">
    <property type="entry name" value="PNPase_PH_RNA-bd_bac/org-type"/>
</dbReference>
<dbReference type="InterPro" id="IPR036456">
    <property type="entry name" value="PNPase_PH_RNA-bd_sf"/>
</dbReference>
<dbReference type="InterPro" id="IPR020568">
    <property type="entry name" value="Ribosomal_Su5_D2-typ_SF"/>
</dbReference>
<dbReference type="InterPro" id="IPR003029">
    <property type="entry name" value="S1_domain"/>
</dbReference>
<dbReference type="NCBIfam" id="TIGR03591">
    <property type="entry name" value="polynuc_phos"/>
    <property type="match status" value="1"/>
</dbReference>
<dbReference type="NCBIfam" id="NF008805">
    <property type="entry name" value="PRK11824.1"/>
    <property type="match status" value="1"/>
</dbReference>
<dbReference type="PANTHER" id="PTHR11252">
    <property type="entry name" value="POLYRIBONUCLEOTIDE NUCLEOTIDYLTRANSFERASE"/>
    <property type="match status" value="1"/>
</dbReference>
<dbReference type="PANTHER" id="PTHR11252:SF0">
    <property type="entry name" value="POLYRIBONUCLEOTIDE NUCLEOTIDYLTRANSFERASE 1, MITOCHONDRIAL"/>
    <property type="match status" value="1"/>
</dbReference>
<dbReference type="Pfam" id="PF00013">
    <property type="entry name" value="KH_1"/>
    <property type="match status" value="1"/>
</dbReference>
<dbReference type="Pfam" id="PF03726">
    <property type="entry name" value="PNPase"/>
    <property type="match status" value="1"/>
</dbReference>
<dbReference type="Pfam" id="PF01138">
    <property type="entry name" value="RNase_PH"/>
    <property type="match status" value="2"/>
</dbReference>
<dbReference type="Pfam" id="PF03725">
    <property type="entry name" value="RNase_PH_C"/>
    <property type="match status" value="2"/>
</dbReference>
<dbReference type="Pfam" id="PF00575">
    <property type="entry name" value="S1"/>
    <property type="match status" value="1"/>
</dbReference>
<dbReference type="PIRSF" id="PIRSF005499">
    <property type="entry name" value="PNPase"/>
    <property type="match status" value="1"/>
</dbReference>
<dbReference type="SMART" id="SM00322">
    <property type="entry name" value="KH"/>
    <property type="match status" value="1"/>
</dbReference>
<dbReference type="SMART" id="SM00316">
    <property type="entry name" value="S1"/>
    <property type="match status" value="1"/>
</dbReference>
<dbReference type="SUPFAM" id="SSF54791">
    <property type="entry name" value="Eukaryotic type KH-domain (KH-domain type I)"/>
    <property type="match status" value="1"/>
</dbReference>
<dbReference type="SUPFAM" id="SSF50249">
    <property type="entry name" value="Nucleic acid-binding proteins"/>
    <property type="match status" value="1"/>
</dbReference>
<dbReference type="SUPFAM" id="SSF46915">
    <property type="entry name" value="Polynucleotide phosphorylase/guanosine pentaphosphate synthase (PNPase/GPSI), domain 3"/>
    <property type="match status" value="1"/>
</dbReference>
<dbReference type="SUPFAM" id="SSF55666">
    <property type="entry name" value="Ribonuclease PH domain 2-like"/>
    <property type="match status" value="2"/>
</dbReference>
<dbReference type="SUPFAM" id="SSF54211">
    <property type="entry name" value="Ribosomal protein S5 domain 2-like"/>
    <property type="match status" value="2"/>
</dbReference>
<dbReference type="PROSITE" id="PS50084">
    <property type="entry name" value="KH_TYPE_1"/>
    <property type="match status" value="1"/>
</dbReference>
<dbReference type="PROSITE" id="PS50126">
    <property type="entry name" value="S1"/>
    <property type="match status" value="1"/>
</dbReference>
<reference key="1">
    <citation type="journal article" date="2009" name="BMC Genomics">
        <title>Pseudogene accumulation in the evolutionary histories of Salmonella enterica serovars Paratyphi A and Typhi.</title>
        <authorList>
            <person name="Holt K.E."/>
            <person name="Thomson N.R."/>
            <person name="Wain J."/>
            <person name="Langridge G.C."/>
            <person name="Hasan R."/>
            <person name="Bhutta Z.A."/>
            <person name="Quail M.A."/>
            <person name="Norbertczak H."/>
            <person name="Walker D."/>
            <person name="Simmonds M."/>
            <person name="White B."/>
            <person name="Bason N."/>
            <person name="Mungall K."/>
            <person name="Dougan G."/>
            <person name="Parkhill J."/>
        </authorList>
    </citation>
    <scope>NUCLEOTIDE SEQUENCE [LARGE SCALE GENOMIC DNA]</scope>
    <source>
        <strain>AKU_12601</strain>
    </source>
</reference>
<protein>
    <recommendedName>
        <fullName evidence="1">Polyribonucleotide nucleotidyltransferase</fullName>
        <ecNumber evidence="1">2.7.7.8</ecNumber>
    </recommendedName>
    <alternativeName>
        <fullName evidence="1">Polynucleotide phosphorylase</fullName>
        <shortName evidence="1">PNPase</shortName>
    </alternativeName>
</protein>
<organism>
    <name type="scientific">Salmonella paratyphi A (strain AKU_12601)</name>
    <dbReference type="NCBI Taxonomy" id="554290"/>
    <lineage>
        <taxon>Bacteria</taxon>
        <taxon>Pseudomonadati</taxon>
        <taxon>Pseudomonadota</taxon>
        <taxon>Gammaproteobacteria</taxon>
        <taxon>Enterobacterales</taxon>
        <taxon>Enterobacteriaceae</taxon>
        <taxon>Salmonella</taxon>
    </lineage>
</organism>
<proteinExistence type="inferred from homology"/>